<organism>
    <name type="scientific">Brucella suis (strain ATCC 23445 / NCTC 10510)</name>
    <dbReference type="NCBI Taxonomy" id="470137"/>
    <lineage>
        <taxon>Bacteria</taxon>
        <taxon>Pseudomonadati</taxon>
        <taxon>Pseudomonadota</taxon>
        <taxon>Alphaproteobacteria</taxon>
        <taxon>Hyphomicrobiales</taxon>
        <taxon>Brucellaceae</taxon>
        <taxon>Brucella/Ochrobactrum group</taxon>
        <taxon>Brucella</taxon>
    </lineage>
</organism>
<comment type="function">
    <text evidence="1">The glycine cleavage system catalyzes the degradation of glycine. The P protein binds the alpha-amino group of glycine through its pyridoxal phosphate cofactor; CO(2) is released and the remaining methylamine moiety is then transferred to the lipoamide cofactor of the H protein.</text>
</comment>
<comment type="catalytic activity">
    <reaction evidence="1">
        <text>N(6)-[(R)-lipoyl]-L-lysyl-[glycine-cleavage complex H protein] + glycine + H(+) = N(6)-[(R)-S(8)-aminomethyldihydrolipoyl]-L-lysyl-[glycine-cleavage complex H protein] + CO2</text>
        <dbReference type="Rhea" id="RHEA:24304"/>
        <dbReference type="Rhea" id="RHEA-COMP:10494"/>
        <dbReference type="Rhea" id="RHEA-COMP:10495"/>
        <dbReference type="ChEBI" id="CHEBI:15378"/>
        <dbReference type="ChEBI" id="CHEBI:16526"/>
        <dbReference type="ChEBI" id="CHEBI:57305"/>
        <dbReference type="ChEBI" id="CHEBI:83099"/>
        <dbReference type="ChEBI" id="CHEBI:83143"/>
        <dbReference type="EC" id="1.4.4.2"/>
    </reaction>
</comment>
<comment type="cofactor">
    <cofactor evidence="1">
        <name>pyridoxal 5'-phosphate</name>
        <dbReference type="ChEBI" id="CHEBI:597326"/>
    </cofactor>
</comment>
<comment type="subunit">
    <text evidence="1">The glycine cleavage system is composed of four proteins: P, T, L and H.</text>
</comment>
<comment type="similarity">
    <text evidence="1">Belongs to the GcvP family.</text>
</comment>
<proteinExistence type="inferred from homology"/>
<accession>A9WZ23</accession>
<name>GCSP_BRUSI</name>
<gene>
    <name evidence="1" type="primary">gcvP</name>
    <name type="ordered locus">BSUIS_B0715</name>
</gene>
<sequence>MTEFLPFVARHIGPRHEDERAMLAALGLPSMETLITQAVPASIRLNRALNLPAALSEADALAELGTIMGRNVVKKSFIGAGYHGVHTPPVIQRNLFENPAWYTAYTPYQSEISQGRLELLFHFQTLVAELTGLPVACASLLDEATAVAEAIGVACRHHRDKRSRILLAGELHPQTVDVVNTRAEPLGWEIATGSDVDDNTAAIVVPWPDTRGVYGDFAKVIADAKAKGALVIAVADPLALTIMEAPARWGADMAVGSMQRYGVPMGFGGPHAAYLAVSEALTRIIPGRIVGQSVDAHGRAAYRLALQTREQHIRRDKATSNICTAQALLANMAAAFAIWHGPAGLQAIATRVAALAARFAAALKAAGVEIAGESLFDTVTAKVPGKAAAIAAEADKGGRLIRIIDADTVGVTFDETSTEEDLTALASLFGAKPVGGDTVLVPGKERGEGFLTQEVFHSHRSETEMMRFLRRLVDKDLALDRAMIPLGSCTMKLNAAAEMMPVSWNTVANLHPFAPAEQVQGYAKMTSDLEAWLCEITGFAGVSLQPNAGSQGEYAGLMAIRHYHQARGQGHRNICLIPSSAHGTNPASASMAGMSVVVVNCRPDGDIDIDDLKAKAEKHRDNLAAFMITYPSTYGVFEEGIKAFCEIVHDNGGQVYFDGANLNALVGLARPADIGADVCHMNLHKTFCIPHGGGGPGVGPIGVAKHLVPYLPGHVEAGSEHAVAAAQFGSASILVITWMYIRMMGGAGLKKATEAAILNANYIAHRLKGVYPILYTGAHDRVAHECIVDTRVLKDSAGITVEDVAKRLIDYGFHAPTMSWPVAGTLMIEPTESEPKLEIDRLCDAMIAIAGEAKKVADGVWPADDNPLANAPHTASDTLATEWKHPYTREEAVFPGGAFDPTAKYWPPVSRVDNVGGDRNLICSCPPVAAYG</sequence>
<feature type="chain" id="PRO_1000083204" description="Glycine dehydrogenase (decarboxylating)">
    <location>
        <begin position="1"/>
        <end position="932"/>
    </location>
</feature>
<feature type="modified residue" description="N6-(pyridoxal phosphate)lysine" evidence="1">
    <location>
        <position position="685"/>
    </location>
</feature>
<reference key="1">
    <citation type="submission" date="2007-12" db="EMBL/GenBank/DDBJ databases">
        <title>Brucella suis ATCC 23445 whole genome shotgun sequencing project.</title>
        <authorList>
            <person name="Setubal J.C."/>
            <person name="Bowns C."/>
            <person name="Boyle S."/>
            <person name="Crasta O.R."/>
            <person name="Czar M.J."/>
            <person name="Dharmanolla C."/>
            <person name="Gillespie J.J."/>
            <person name="Kenyon R.W."/>
            <person name="Lu J."/>
            <person name="Mane S."/>
            <person name="Mohapatra S."/>
            <person name="Nagrani S."/>
            <person name="Purkayastha A."/>
            <person name="Rajasimha H.K."/>
            <person name="Shallom J.M."/>
            <person name="Shallom S."/>
            <person name="Shukla M."/>
            <person name="Snyder E.E."/>
            <person name="Sobral B.W."/>
            <person name="Wattam A.R."/>
            <person name="Will R."/>
            <person name="Williams K."/>
            <person name="Yoo H."/>
            <person name="Bruce D."/>
            <person name="Detter C."/>
            <person name="Munk C."/>
            <person name="Brettin T.S."/>
        </authorList>
    </citation>
    <scope>NUCLEOTIDE SEQUENCE [LARGE SCALE GENOMIC DNA]</scope>
    <source>
        <strain>ATCC 23445 / NCTC 10510</strain>
    </source>
</reference>
<dbReference type="EC" id="1.4.4.2" evidence="1"/>
<dbReference type="EMBL" id="CP000912">
    <property type="protein sequence ID" value="ABY39689.1"/>
    <property type="molecule type" value="Genomic_DNA"/>
</dbReference>
<dbReference type="RefSeq" id="WP_006073834.1">
    <property type="nucleotide sequence ID" value="NC_010167.1"/>
</dbReference>
<dbReference type="SMR" id="A9WZ23"/>
<dbReference type="KEGG" id="bmt:BSUIS_B0715"/>
<dbReference type="HOGENOM" id="CLU_004620_2_3_5"/>
<dbReference type="PRO" id="PR:A9WZ23"/>
<dbReference type="Proteomes" id="UP000008545">
    <property type="component" value="Chromosome II"/>
</dbReference>
<dbReference type="GO" id="GO:0005829">
    <property type="term" value="C:cytosol"/>
    <property type="evidence" value="ECO:0007669"/>
    <property type="project" value="TreeGrafter"/>
</dbReference>
<dbReference type="GO" id="GO:0005960">
    <property type="term" value="C:glycine cleavage complex"/>
    <property type="evidence" value="ECO:0007669"/>
    <property type="project" value="TreeGrafter"/>
</dbReference>
<dbReference type="GO" id="GO:0016594">
    <property type="term" value="F:glycine binding"/>
    <property type="evidence" value="ECO:0007669"/>
    <property type="project" value="TreeGrafter"/>
</dbReference>
<dbReference type="GO" id="GO:0004375">
    <property type="term" value="F:glycine dehydrogenase (decarboxylating) activity"/>
    <property type="evidence" value="ECO:0007669"/>
    <property type="project" value="UniProtKB-EC"/>
</dbReference>
<dbReference type="GO" id="GO:0030170">
    <property type="term" value="F:pyridoxal phosphate binding"/>
    <property type="evidence" value="ECO:0007669"/>
    <property type="project" value="TreeGrafter"/>
</dbReference>
<dbReference type="GO" id="GO:0019464">
    <property type="term" value="P:glycine decarboxylation via glycine cleavage system"/>
    <property type="evidence" value="ECO:0007669"/>
    <property type="project" value="UniProtKB-UniRule"/>
</dbReference>
<dbReference type="CDD" id="cd00613">
    <property type="entry name" value="GDC-P"/>
    <property type="match status" value="2"/>
</dbReference>
<dbReference type="FunFam" id="3.90.1150.10:FF:000007">
    <property type="entry name" value="Glycine dehydrogenase (decarboxylating), mitochondrial"/>
    <property type="match status" value="1"/>
</dbReference>
<dbReference type="FunFam" id="3.40.640.10:FF:000007">
    <property type="entry name" value="glycine dehydrogenase (Decarboxylating), mitochondrial"/>
    <property type="match status" value="1"/>
</dbReference>
<dbReference type="Gene3D" id="3.90.1150.10">
    <property type="entry name" value="Aspartate Aminotransferase, domain 1"/>
    <property type="match status" value="2"/>
</dbReference>
<dbReference type="Gene3D" id="3.40.640.10">
    <property type="entry name" value="Type I PLP-dependent aspartate aminotransferase-like (Major domain)"/>
    <property type="match status" value="2"/>
</dbReference>
<dbReference type="HAMAP" id="MF_00711">
    <property type="entry name" value="GcvP"/>
    <property type="match status" value="1"/>
</dbReference>
<dbReference type="InterPro" id="IPR003437">
    <property type="entry name" value="GcvP"/>
</dbReference>
<dbReference type="InterPro" id="IPR049316">
    <property type="entry name" value="GDC-P_C"/>
</dbReference>
<dbReference type="InterPro" id="IPR049315">
    <property type="entry name" value="GDC-P_N"/>
</dbReference>
<dbReference type="InterPro" id="IPR020581">
    <property type="entry name" value="GDC_P"/>
</dbReference>
<dbReference type="InterPro" id="IPR015424">
    <property type="entry name" value="PyrdxlP-dep_Trfase"/>
</dbReference>
<dbReference type="InterPro" id="IPR015421">
    <property type="entry name" value="PyrdxlP-dep_Trfase_major"/>
</dbReference>
<dbReference type="InterPro" id="IPR015422">
    <property type="entry name" value="PyrdxlP-dep_Trfase_small"/>
</dbReference>
<dbReference type="NCBIfam" id="TIGR00461">
    <property type="entry name" value="gcvP"/>
    <property type="match status" value="1"/>
</dbReference>
<dbReference type="NCBIfam" id="NF003346">
    <property type="entry name" value="PRK04366.1"/>
    <property type="match status" value="1"/>
</dbReference>
<dbReference type="PANTHER" id="PTHR11773:SF1">
    <property type="entry name" value="GLYCINE DEHYDROGENASE (DECARBOXYLATING), MITOCHONDRIAL"/>
    <property type="match status" value="1"/>
</dbReference>
<dbReference type="PANTHER" id="PTHR11773">
    <property type="entry name" value="GLYCINE DEHYDROGENASE, DECARBOXYLATING"/>
    <property type="match status" value="1"/>
</dbReference>
<dbReference type="Pfam" id="PF21478">
    <property type="entry name" value="GcvP2_C"/>
    <property type="match status" value="1"/>
</dbReference>
<dbReference type="Pfam" id="PF02347">
    <property type="entry name" value="GDC-P"/>
    <property type="match status" value="2"/>
</dbReference>
<dbReference type="SUPFAM" id="SSF53383">
    <property type="entry name" value="PLP-dependent transferases"/>
    <property type="match status" value="2"/>
</dbReference>
<keyword id="KW-0560">Oxidoreductase</keyword>
<keyword id="KW-0663">Pyridoxal phosphate</keyword>
<protein>
    <recommendedName>
        <fullName evidence="1">Glycine dehydrogenase (decarboxylating)</fullName>
        <ecNumber evidence="1">1.4.4.2</ecNumber>
    </recommendedName>
    <alternativeName>
        <fullName evidence="1">Glycine cleavage system P-protein</fullName>
    </alternativeName>
    <alternativeName>
        <fullName evidence="1">Glycine decarboxylase</fullName>
    </alternativeName>
    <alternativeName>
        <fullName evidence="1">Glycine dehydrogenase (aminomethyl-transferring)</fullName>
    </alternativeName>
</protein>
<evidence type="ECO:0000255" key="1">
    <source>
        <dbReference type="HAMAP-Rule" id="MF_00711"/>
    </source>
</evidence>